<sequence>MPKRTDLKSVLVIGSGPIVIGQAAEFDYSGTQALRVLKEEGLRVILVNSNPATIMTDPEFADATYVEPITPEVVEKIIAKERPDAILPTLGGQTALNTAIALDKNGVLEKYNVELIGANIAAIELGEDREKFKGVVERCGAESARSHIIHTMEEAFAAAEDLGYPMVVRPSFTMGGLGSGLAYNEDDLRRIVGQGLQYSPTTEVLLEESILGWKEYELEMMRDKNDNVVVVCSIENFDPVGVHTGDSITVAPALTLTDREYQKLRDVSIAVIREVGVDTGGCNIQFAIDPATGRVVVIEMNPRVSRSSALASKATGFAIAKIATKLSLGYTLDEIPNDITQKTPASFEPTLDYVVVKVPRFAFEKFPAADNTLTTTMKSVGEAMAMGRNFTEALQKALRSLEQKGSQLDFSSVPEYEVAELIEKAKRPTTDRLHQVQRALLGGATVEDLFEATKIDPWFLDQLQLLNETAQEIRKAGVLTEEMLRNAKRHGFSDEQIGALTHNNEAVVRGVRQALGIRPVYKTVDTCAAEFAAYTPYHYSSYDEEDEVGLHAKPSVIILGSGPNRIGQGIEFDYSCVHASMALRKAGYETVMVNCNPETVSTDYDVSTRLYFEPLTLEDVLEVIAAEERTGGVMGVFVQLGGQTPLKLAQQLADAGVPILGTSPEAIDLAEHRGAFARVLDEAGLTSPKNGTAVSFEDAKKIADEIGYPVLVRPSYVLGGRGMEIVYDEANLSRYIANATEITPDHPVLIDRFLEDAVEIDVDALFDGTDMYLGGIMEHIEEAGIHSGDSACVLPPITLGNNVIERVRTATRAIAEGVGVRGLINIQFALASDVLYVLEANPRASRTVPFVSKATGVQMAKAAALIGTGVTINQLRGAYKMLPETGDGSTLPLDAPVAVKEAVLPFSRFRTPEGKVVDSLLGPEMRSTGEVMGIDKHFDTAFAKSQAAANNALPTEGKIFVSVANRDKRSVIMGVKRLSDLGFEIVSTGGTADVLRRNGIQATPVRKVAEGSSAEGEGTIADLVIAGEIDMVFNTPSGGEARSDGYELRAAATSIGIPCITTVAEFNAAVQAIEALRTYEWSVTSLQEHAANLSAAMEAANA</sequence>
<keyword id="KW-0028">Amino-acid biosynthesis</keyword>
<keyword id="KW-0055">Arginine biosynthesis</keyword>
<keyword id="KW-0067">ATP-binding</keyword>
<keyword id="KW-0436">Ligase</keyword>
<keyword id="KW-0460">Magnesium</keyword>
<keyword id="KW-0464">Manganese</keyword>
<keyword id="KW-0479">Metal-binding</keyword>
<keyword id="KW-0547">Nucleotide-binding</keyword>
<keyword id="KW-0665">Pyrimidine biosynthesis</keyword>
<keyword id="KW-0677">Repeat</keyword>
<organism>
    <name type="scientific">Paenarthrobacter aurescens (strain TC1)</name>
    <dbReference type="NCBI Taxonomy" id="290340"/>
    <lineage>
        <taxon>Bacteria</taxon>
        <taxon>Bacillati</taxon>
        <taxon>Actinomycetota</taxon>
        <taxon>Actinomycetes</taxon>
        <taxon>Micrococcales</taxon>
        <taxon>Micrococcaceae</taxon>
        <taxon>Paenarthrobacter</taxon>
    </lineage>
</organism>
<proteinExistence type="inferred from homology"/>
<protein>
    <recommendedName>
        <fullName evidence="1">Carbamoyl phosphate synthase large chain</fullName>
        <ecNumber evidence="1">6.3.4.16</ecNumber>
        <ecNumber evidence="1">6.3.5.5</ecNumber>
    </recommendedName>
    <alternativeName>
        <fullName evidence="1">Carbamoyl phosphate synthetase ammonia chain</fullName>
    </alternativeName>
</protein>
<dbReference type="EC" id="6.3.4.16" evidence="1"/>
<dbReference type="EC" id="6.3.5.5" evidence="1"/>
<dbReference type="EMBL" id="CP000474">
    <property type="protein sequence ID" value="ABM06627.1"/>
    <property type="molecule type" value="Genomic_DNA"/>
</dbReference>
<dbReference type="RefSeq" id="WP_011774949.1">
    <property type="nucleotide sequence ID" value="NC_008711.1"/>
</dbReference>
<dbReference type="SMR" id="A1R6Z3"/>
<dbReference type="STRING" id="290340.AAur_2265"/>
<dbReference type="KEGG" id="aau:AAur_2265"/>
<dbReference type="eggNOG" id="COG0458">
    <property type="taxonomic scope" value="Bacteria"/>
</dbReference>
<dbReference type="HOGENOM" id="CLU_000513_1_2_11"/>
<dbReference type="OrthoDB" id="9804197at2"/>
<dbReference type="UniPathway" id="UPA00068">
    <property type="reaction ID" value="UER00171"/>
</dbReference>
<dbReference type="UniPathway" id="UPA00070">
    <property type="reaction ID" value="UER00115"/>
</dbReference>
<dbReference type="Proteomes" id="UP000000637">
    <property type="component" value="Chromosome"/>
</dbReference>
<dbReference type="GO" id="GO:0005737">
    <property type="term" value="C:cytoplasm"/>
    <property type="evidence" value="ECO:0007669"/>
    <property type="project" value="TreeGrafter"/>
</dbReference>
<dbReference type="GO" id="GO:0005524">
    <property type="term" value="F:ATP binding"/>
    <property type="evidence" value="ECO:0007669"/>
    <property type="project" value="UniProtKB-UniRule"/>
</dbReference>
<dbReference type="GO" id="GO:0004087">
    <property type="term" value="F:carbamoyl-phosphate synthase (ammonia) activity"/>
    <property type="evidence" value="ECO:0007669"/>
    <property type="project" value="RHEA"/>
</dbReference>
<dbReference type="GO" id="GO:0004088">
    <property type="term" value="F:carbamoyl-phosphate synthase (glutamine-hydrolyzing) activity"/>
    <property type="evidence" value="ECO:0007669"/>
    <property type="project" value="UniProtKB-UniRule"/>
</dbReference>
<dbReference type="GO" id="GO:0046872">
    <property type="term" value="F:metal ion binding"/>
    <property type="evidence" value="ECO:0007669"/>
    <property type="project" value="UniProtKB-KW"/>
</dbReference>
<dbReference type="GO" id="GO:0044205">
    <property type="term" value="P:'de novo' UMP biosynthetic process"/>
    <property type="evidence" value="ECO:0007669"/>
    <property type="project" value="UniProtKB-UniRule"/>
</dbReference>
<dbReference type="GO" id="GO:0006541">
    <property type="term" value="P:glutamine metabolic process"/>
    <property type="evidence" value="ECO:0007669"/>
    <property type="project" value="TreeGrafter"/>
</dbReference>
<dbReference type="GO" id="GO:0006526">
    <property type="term" value="P:L-arginine biosynthetic process"/>
    <property type="evidence" value="ECO:0007669"/>
    <property type="project" value="UniProtKB-UniRule"/>
</dbReference>
<dbReference type="CDD" id="cd01424">
    <property type="entry name" value="MGS_CPS_II"/>
    <property type="match status" value="1"/>
</dbReference>
<dbReference type="FunFam" id="1.10.1030.10:FF:000002">
    <property type="entry name" value="Carbamoyl-phosphate synthase large chain"/>
    <property type="match status" value="1"/>
</dbReference>
<dbReference type="FunFam" id="3.30.1490.20:FF:000001">
    <property type="entry name" value="Carbamoyl-phosphate synthase large chain"/>
    <property type="match status" value="1"/>
</dbReference>
<dbReference type="FunFam" id="3.30.470.20:FF:000007">
    <property type="entry name" value="Carbamoyl-phosphate synthase large chain"/>
    <property type="match status" value="1"/>
</dbReference>
<dbReference type="FunFam" id="3.30.470.20:FF:000014">
    <property type="entry name" value="Carbamoyl-phosphate synthase large chain"/>
    <property type="match status" value="1"/>
</dbReference>
<dbReference type="FunFam" id="3.40.50.20:FF:000001">
    <property type="entry name" value="Carbamoyl-phosphate synthase large chain"/>
    <property type="match status" value="2"/>
</dbReference>
<dbReference type="Gene3D" id="3.40.50.20">
    <property type="match status" value="2"/>
</dbReference>
<dbReference type="Gene3D" id="3.30.1490.20">
    <property type="entry name" value="ATP-grasp fold, A domain"/>
    <property type="match status" value="1"/>
</dbReference>
<dbReference type="Gene3D" id="3.30.470.20">
    <property type="entry name" value="ATP-grasp fold, B domain"/>
    <property type="match status" value="2"/>
</dbReference>
<dbReference type="Gene3D" id="1.10.1030.10">
    <property type="entry name" value="Carbamoyl-phosphate synthetase, large subunit oligomerisation domain"/>
    <property type="match status" value="1"/>
</dbReference>
<dbReference type="Gene3D" id="3.40.50.1380">
    <property type="entry name" value="Methylglyoxal synthase-like domain"/>
    <property type="match status" value="1"/>
</dbReference>
<dbReference type="HAMAP" id="MF_01210_B">
    <property type="entry name" value="CPSase_L_chain_B"/>
    <property type="match status" value="1"/>
</dbReference>
<dbReference type="InterPro" id="IPR011761">
    <property type="entry name" value="ATP-grasp"/>
</dbReference>
<dbReference type="InterPro" id="IPR013815">
    <property type="entry name" value="ATP_grasp_subdomain_1"/>
</dbReference>
<dbReference type="InterPro" id="IPR006275">
    <property type="entry name" value="CarbamoylP_synth_lsu"/>
</dbReference>
<dbReference type="InterPro" id="IPR005480">
    <property type="entry name" value="CarbamoylP_synth_lsu_oligo"/>
</dbReference>
<dbReference type="InterPro" id="IPR036897">
    <property type="entry name" value="CarbamoylP_synth_lsu_oligo_sf"/>
</dbReference>
<dbReference type="InterPro" id="IPR005479">
    <property type="entry name" value="CbamoylP_synth_lsu-like_ATP-bd"/>
</dbReference>
<dbReference type="InterPro" id="IPR005483">
    <property type="entry name" value="CbamoylP_synth_lsu_CPSase_dom"/>
</dbReference>
<dbReference type="InterPro" id="IPR011607">
    <property type="entry name" value="MGS-like_dom"/>
</dbReference>
<dbReference type="InterPro" id="IPR036914">
    <property type="entry name" value="MGS-like_dom_sf"/>
</dbReference>
<dbReference type="InterPro" id="IPR033937">
    <property type="entry name" value="MGS_CPS_CarB"/>
</dbReference>
<dbReference type="InterPro" id="IPR016185">
    <property type="entry name" value="PreATP-grasp_dom_sf"/>
</dbReference>
<dbReference type="NCBIfam" id="TIGR01369">
    <property type="entry name" value="CPSaseII_lrg"/>
    <property type="match status" value="1"/>
</dbReference>
<dbReference type="NCBIfam" id="NF003671">
    <property type="entry name" value="PRK05294.1"/>
    <property type="match status" value="1"/>
</dbReference>
<dbReference type="NCBIfam" id="NF009455">
    <property type="entry name" value="PRK12815.1"/>
    <property type="match status" value="1"/>
</dbReference>
<dbReference type="PANTHER" id="PTHR11405:SF53">
    <property type="entry name" value="CARBAMOYL-PHOSPHATE SYNTHASE [AMMONIA], MITOCHONDRIAL"/>
    <property type="match status" value="1"/>
</dbReference>
<dbReference type="PANTHER" id="PTHR11405">
    <property type="entry name" value="CARBAMOYLTRANSFERASE FAMILY MEMBER"/>
    <property type="match status" value="1"/>
</dbReference>
<dbReference type="Pfam" id="PF02786">
    <property type="entry name" value="CPSase_L_D2"/>
    <property type="match status" value="2"/>
</dbReference>
<dbReference type="Pfam" id="PF02787">
    <property type="entry name" value="CPSase_L_D3"/>
    <property type="match status" value="1"/>
</dbReference>
<dbReference type="Pfam" id="PF02142">
    <property type="entry name" value="MGS"/>
    <property type="match status" value="1"/>
</dbReference>
<dbReference type="PRINTS" id="PR00098">
    <property type="entry name" value="CPSASE"/>
</dbReference>
<dbReference type="SMART" id="SM01096">
    <property type="entry name" value="CPSase_L_D3"/>
    <property type="match status" value="1"/>
</dbReference>
<dbReference type="SMART" id="SM00851">
    <property type="entry name" value="MGS"/>
    <property type="match status" value="1"/>
</dbReference>
<dbReference type="SUPFAM" id="SSF48108">
    <property type="entry name" value="Carbamoyl phosphate synthetase, large subunit connection domain"/>
    <property type="match status" value="1"/>
</dbReference>
<dbReference type="SUPFAM" id="SSF56059">
    <property type="entry name" value="Glutathione synthetase ATP-binding domain-like"/>
    <property type="match status" value="2"/>
</dbReference>
<dbReference type="SUPFAM" id="SSF52335">
    <property type="entry name" value="Methylglyoxal synthase-like"/>
    <property type="match status" value="1"/>
</dbReference>
<dbReference type="SUPFAM" id="SSF52440">
    <property type="entry name" value="PreATP-grasp domain"/>
    <property type="match status" value="2"/>
</dbReference>
<dbReference type="PROSITE" id="PS50975">
    <property type="entry name" value="ATP_GRASP"/>
    <property type="match status" value="2"/>
</dbReference>
<dbReference type="PROSITE" id="PS00866">
    <property type="entry name" value="CPSASE_1"/>
    <property type="match status" value="2"/>
</dbReference>
<dbReference type="PROSITE" id="PS00867">
    <property type="entry name" value="CPSASE_2"/>
    <property type="match status" value="2"/>
</dbReference>
<dbReference type="PROSITE" id="PS51855">
    <property type="entry name" value="MGS"/>
    <property type="match status" value="1"/>
</dbReference>
<reference key="1">
    <citation type="journal article" date="2006" name="PLoS Genet.">
        <title>Secrets of soil survival revealed by the genome sequence of Arthrobacter aurescens TC1.</title>
        <authorList>
            <person name="Mongodin E.F."/>
            <person name="Shapir N."/>
            <person name="Daugherty S.C."/>
            <person name="DeBoy R.T."/>
            <person name="Emerson J.B."/>
            <person name="Shvartzbeyn A."/>
            <person name="Radune D."/>
            <person name="Vamathevan J."/>
            <person name="Riggs F."/>
            <person name="Grinberg V."/>
            <person name="Khouri H.M."/>
            <person name="Wackett L.P."/>
            <person name="Nelson K.E."/>
            <person name="Sadowsky M.J."/>
        </authorList>
    </citation>
    <scope>NUCLEOTIDE SEQUENCE [LARGE SCALE GENOMIC DNA]</scope>
    <source>
        <strain>TC1</strain>
    </source>
</reference>
<gene>
    <name evidence="1" type="primary">carB</name>
    <name type="ordered locus">AAur_2265</name>
</gene>
<name>CARB_PAEAT</name>
<feature type="chain" id="PRO_1000066334" description="Carbamoyl phosphate synthase large chain">
    <location>
        <begin position="1"/>
        <end position="1102"/>
    </location>
</feature>
<feature type="domain" description="ATP-grasp 1" evidence="1">
    <location>
        <begin position="133"/>
        <end position="328"/>
    </location>
</feature>
<feature type="domain" description="ATP-grasp 2" evidence="1">
    <location>
        <begin position="677"/>
        <end position="868"/>
    </location>
</feature>
<feature type="domain" description="MGS-like" evidence="1">
    <location>
        <begin position="951"/>
        <end position="1096"/>
    </location>
</feature>
<feature type="region of interest" description="Carboxyphosphate synthetic domain" evidence="1">
    <location>
        <begin position="1"/>
        <end position="402"/>
    </location>
</feature>
<feature type="region of interest" description="Oligomerization domain" evidence="1">
    <location>
        <begin position="403"/>
        <end position="546"/>
    </location>
</feature>
<feature type="region of interest" description="Carbamoyl phosphate synthetic domain" evidence="1">
    <location>
        <begin position="547"/>
        <end position="950"/>
    </location>
</feature>
<feature type="region of interest" description="Allosteric domain" evidence="1">
    <location>
        <begin position="951"/>
        <end position="1102"/>
    </location>
</feature>
<feature type="binding site" evidence="1">
    <location>
        <position position="129"/>
    </location>
    <ligand>
        <name>ATP</name>
        <dbReference type="ChEBI" id="CHEBI:30616"/>
        <label>1</label>
    </ligand>
</feature>
<feature type="binding site" evidence="1">
    <location>
        <position position="169"/>
    </location>
    <ligand>
        <name>ATP</name>
        <dbReference type="ChEBI" id="CHEBI:30616"/>
        <label>1</label>
    </ligand>
</feature>
<feature type="binding site" evidence="1">
    <location>
        <position position="175"/>
    </location>
    <ligand>
        <name>ATP</name>
        <dbReference type="ChEBI" id="CHEBI:30616"/>
        <label>1</label>
    </ligand>
</feature>
<feature type="binding site" evidence="1">
    <location>
        <position position="176"/>
    </location>
    <ligand>
        <name>ATP</name>
        <dbReference type="ChEBI" id="CHEBI:30616"/>
        <label>1</label>
    </ligand>
</feature>
<feature type="binding site" evidence="1">
    <location>
        <position position="208"/>
    </location>
    <ligand>
        <name>ATP</name>
        <dbReference type="ChEBI" id="CHEBI:30616"/>
        <label>1</label>
    </ligand>
</feature>
<feature type="binding site" evidence="1">
    <location>
        <position position="210"/>
    </location>
    <ligand>
        <name>ATP</name>
        <dbReference type="ChEBI" id="CHEBI:30616"/>
        <label>1</label>
    </ligand>
</feature>
<feature type="binding site" evidence="1">
    <location>
        <position position="215"/>
    </location>
    <ligand>
        <name>ATP</name>
        <dbReference type="ChEBI" id="CHEBI:30616"/>
        <label>1</label>
    </ligand>
</feature>
<feature type="binding site" evidence="1">
    <location>
        <position position="241"/>
    </location>
    <ligand>
        <name>ATP</name>
        <dbReference type="ChEBI" id="CHEBI:30616"/>
        <label>1</label>
    </ligand>
</feature>
<feature type="binding site" evidence="1">
    <location>
        <position position="242"/>
    </location>
    <ligand>
        <name>ATP</name>
        <dbReference type="ChEBI" id="CHEBI:30616"/>
        <label>1</label>
    </ligand>
</feature>
<feature type="binding site" evidence="1">
    <location>
        <position position="243"/>
    </location>
    <ligand>
        <name>ATP</name>
        <dbReference type="ChEBI" id="CHEBI:30616"/>
        <label>1</label>
    </ligand>
</feature>
<feature type="binding site" evidence="1">
    <location>
        <position position="285"/>
    </location>
    <ligand>
        <name>ATP</name>
        <dbReference type="ChEBI" id="CHEBI:30616"/>
        <label>1</label>
    </ligand>
</feature>
<feature type="binding site" evidence="1">
    <location>
        <position position="285"/>
    </location>
    <ligand>
        <name>Mg(2+)</name>
        <dbReference type="ChEBI" id="CHEBI:18420"/>
        <label>1</label>
    </ligand>
</feature>
<feature type="binding site" evidence="1">
    <location>
        <position position="285"/>
    </location>
    <ligand>
        <name>Mn(2+)</name>
        <dbReference type="ChEBI" id="CHEBI:29035"/>
        <label>1</label>
    </ligand>
</feature>
<feature type="binding site" evidence="1">
    <location>
        <position position="299"/>
    </location>
    <ligand>
        <name>ATP</name>
        <dbReference type="ChEBI" id="CHEBI:30616"/>
        <label>1</label>
    </ligand>
</feature>
<feature type="binding site" evidence="1">
    <location>
        <position position="299"/>
    </location>
    <ligand>
        <name>Mg(2+)</name>
        <dbReference type="ChEBI" id="CHEBI:18420"/>
        <label>1</label>
    </ligand>
</feature>
<feature type="binding site" evidence="1">
    <location>
        <position position="299"/>
    </location>
    <ligand>
        <name>Mg(2+)</name>
        <dbReference type="ChEBI" id="CHEBI:18420"/>
        <label>2</label>
    </ligand>
</feature>
<feature type="binding site" evidence="1">
    <location>
        <position position="299"/>
    </location>
    <ligand>
        <name>Mn(2+)</name>
        <dbReference type="ChEBI" id="CHEBI:29035"/>
        <label>1</label>
    </ligand>
</feature>
<feature type="binding site" evidence="1">
    <location>
        <position position="299"/>
    </location>
    <ligand>
        <name>Mn(2+)</name>
        <dbReference type="ChEBI" id="CHEBI:29035"/>
        <label>2</label>
    </ligand>
</feature>
<feature type="binding site" evidence="1">
    <location>
        <position position="301"/>
    </location>
    <ligand>
        <name>Mg(2+)</name>
        <dbReference type="ChEBI" id="CHEBI:18420"/>
        <label>2</label>
    </ligand>
</feature>
<feature type="binding site" evidence="1">
    <location>
        <position position="301"/>
    </location>
    <ligand>
        <name>Mn(2+)</name>
        <dbReference type="ChEBI" id="CHEBI:29035"/>
        <label>2</label>
    </ligand>
</feature>
<feature type="binding site" evidence="1">
    <location>
        <position position="713"/>
    </location>
    <ligand>
        <name>ATP</name>
        <dbReference type="ChEBI" id="CHEBI:30616"/>
        <label>2</label>
    </ligand>
</feature>
<feature type="binding site" evidence="1">
    <location>
        <position position="752"/>
    </location>
    <ligand>
        <name>ATP</name>
        <dbReference type="ChEBI" id="CHEBI:30616"/>
        <label>2</label>
    </ligand>
</feature>
<feature type="binding site" evidence="1">
    <location>
        <position position="754"/>
    </location>
    <ligand>
        <name>ATP</name>
        <dbReference type="ChEBI" id="CHEBI:30616"/>
        <label>2</label>
    </ligand>
</feature>
<feature type="binding site" evidence="1">
    <location>
        <position position="759"/>
    </location>
    <ligand>
        <name>ATP</name>
        <dbReference type="ChEBI" id="CHEBI:30616"/>
        <label>2</label>
    </ligand>
</feature>
<feature type="binding site" evidence="1">
    <location>
        <position position="784"/>
    </location>
    <ligand>
        <name>ATP</name>
        <dbReference type="ChEBI" id="CHEBI:30616"/>
        <label>2</label>
    </ligand>
</feature>
<feature type="binding site" evidence="1">
    <location>
        <position position="785"/>
    </location>
    <ligand>
        <name>ATP</name>
        <dbReference type="ChEBI" id="CHEBI:30616"/>
        <label>2</label>
    </ligand>
</feature>
<feature type="binding site" evidence="1">
    <location>
        <position position="786"/>
    </location>
    <ligand>
        <name>ATP</name>
        <dbReference type="ChEBI" id="CHEBI:30616"/>
        <label>2</label>
    </ligand>
</feature>
<feature type="binding site" evidence="1">
    <location>
        <position position="787"/>
    </location>
    <ligand>
        <name>ATP</name>
        <dbReference type="ChEBI" id="CHEBI:30616"/>
        <label>2</label>
    </ligand>
</feature>
<feature type="binding site" evidence="1">
    <location>
        <position position="827"/>
    </location>
    <ligand>
        <name>ATP</name>
        <dbReference type="ChEBI" id="CHEBI:30616"/>
        <label>2</label>
    </ligand>
</feature>
<feature type="binding site" evidence="1">
    <location>
        <position position="827"/>
    </location>
    <ligand>
        <name>Mg(2+)</name>
        <dbReference type="ChEBI" id="CHEBI:18420"/>
        <label>3</label>
    </ligand>
</feature>
<feature type="binding site" evidence="1">
    <location>
        <position position="827"/>
    </location>
    <ligand>
        <name>Mn(2+)</name>
        <dbReference type="ChEBI" id="CHEBI:29035"/>
        <label>3</label>
    </ligand>
</feature>
<feature type="binding site" evidence="1">
    <location>
        <position position="839"/>
    </location>
    <ligand>
        <name>ATP</name>
        <dbReference type="ChEBI" id="CHEBI:30616"/>
        <label>2</label>
    </ligand>
</feature>
<feature type="binding site" evidence="1">
    <location>
        <position position="839"/>
    </location>
    <ligand>
        <name>Mg(2+)</name>
        <dbReference type="ChEBI" id="CHEBI:18420"/>
        <label>3</label>
    </ligand>
</feature>
<feature type="binding site" evidence="1">
    <location>
        <position position="839"/>
    </location>
    <ligand>
        <name>Mg(2+)</name>
        <dbReference type="ChEBI" id="CHEBI:18420"/>
        <label>4</label>
    </ligand>
</feature>
<feature type="binding site" evidence="1">
    <location>
        <position position="839"/>
    </location>
    <ligand>
        <name>Mn(2+)</name>
        <dbReference type="ChEBI" id="CHEBI:29035"/>
        <label>3</label>
    </ligand>
</feature>
<feature type="binding site" evidence="1">
    <location>
        <position position="839"/>
    </location>
    <ligand>
        <name>Mn(2+)</name>
        <dbReference type="ChEBI" id="CHEBI:29035"/>
        <label>4</label>
    </ligand>
</feature>
<feature type="binding site" evidence="1">
    <location>
        <position position="841"/>
    </location>
    <ligand>
        <name>Mg(2+)</name>
        <dbReference type="ChEBI" id="CHEBI:18420"/>
        <label>4</label>
    </ligand>
</feature>
<feature type="binding site" evidence="1">
    <location>
        <position position="841"/>
    </location>
    <ligand>
        <name>Mn(2+)</name>
        <dbReference type="ChEBI" id="CHEBI:29035"/>
        <label>4</label>
    </ligand>
</feature>
<comment type="function">
    <text evidence="1">Large subunit of the glutamine-dependent carbamoyl phosphate synthetase (CPSase). CPSase catalyzes the formation of carbamoyl phosphate from the ammonia moiety of glutamine, carbonate, and phosphate donated by ATP, constituting the first step of 2 biosynthetic pathways, one leading to arginine and/or urea and the other to pyrimidine nucleotides. The large subunit (synthetase) binds the substrates ammonia (free or transferred from glutamine from the small subunit), hydrogencarbonate and ATP and carries out an ATP-coupled ligase reaction, activating hydrogencarbonate by forming carboxy phosphate which reacts with ammonia to form carbamoyl phosphate.</text>
</comment>
<comment type="catalytic activity">
    <reaction evidence="1">
        <text>hydrogencarbonate + L-glutamine + 2 ATP + H2O = carbamoyl phosphate + L-glutamate + 2 ADP + phosphate + 2 H(+)</text>
        <dbReference type="Rhea" id="RHEA:18633"/>
        <dbReference type="ChEBI" id="CHEBI:15377"/>
        <dbReference type="ChEBI" id="CHEBI:15378"/>
        <dbReference type="ChEBI" id="CHEBI:17544"/>
        <dbReference type="ChEBI" id="CHEBI:29985"/>
        <dbReference type="ChEBI" id="CHEBI:30616"/>
        <dbReference type="ChEBI" id="CHEBI:43474"/>
        <dbReference type="ChEBI" id="CHEBI:58228"/>
        <dbReference type="ChEBI" id="CHEBI:58359"/>
        <dbReference type="ChEBI" id="CHEBI:456216"/>
        <dbReference type="EC" id="6.3.5.5"/>
    </reaction>
</comment>
<comment type="catalytic activity">
    <molecule>Carbamoyl phosphate synthase large chain</molecule>
    <reaction evidence="1">
        <text>hydrogencarbonate + NH4(+) + 2 ATP = carbamoyl phosphate + 2 ADP + phosphate + 2 H(+)</text>
        <dbReference type="Rhea" id="RHEA:18029"/>
        <dbReference type="ChEBI" id="CHEBI:15378"/>
        <dbReference type="ChEBI" id="CHEBI:17544"/>
        <dbReference type="ChEBI" id="CHEBI:28938"/>
        <dbReference type="ChEBI" id="CHEBI:30616"/>
        <dbReference type="ChEBI" id="CHEBI:43474"/>
        <dbReference type="ChEBI" id="CHEBI:58228"/>
        <dbReference type="ChEBI" id="CHEBI:456216"/>
        <dbReference type="EC" id="6.3.4.16"/>
    </reaction>
</comment>
<comment type="cofactor">
    <cofactor evidence="1">
        <name>Mg(2+)</name>
        <dbReference type="ChEBI" id="CHEBI:18420"/>
    </cofactor>
    <cofactor evidence="1">
        <name>Mn(2+)</name>
        <dbReference type="ChEBI" id="CHEBI:29035"/>
    </cofactor>
    <text evidence="1">Binds 4 Mg(2+) or Mn(2+) ions per subunit.</text>
</comment>
<comment type="pathway">
    <text evidence="1">Amino-acid biosynthesis; L-arginine biosynthesis; carbamoyl phosphate from bicarbonate: step 1/1.</text>
</comment>
<comment type="pathway">
    <text evidence="1">Pyrimidine metabolism; UMP biosynthesis via de novo pathway; (S)-dihydroorotate from bicarbonate: step 1/3.</text>
</comment>
<comment type="subunit">
    <text evidence="1">Composed of two chains; the small (or glutamine) chain promotes the hydrolysis of glutamine to ammonia, which is used by the large (or ammonia) chain to synthesize carbamoyl phosphate. Tetramer of heterodimers (alpha,beta)4.</text>
</comment>
<comment type="domain">
    <text evidence="1">The large subunit is composed of 2 ATP-grasp domains that are involved in binding the 2 ATP molecules needed for carbamoyl phosphate synthesis. The N-terminal ATP-grasp domain (referred to as the carboxyphosphate synthetic component) catalyzes the ATP-dependent phosphorylation of hydrogencarbonate to carboxyphosphate and the subsequent nucleophilic attack by ammonia to form a carbamate intermediate. The C-terminal ATP-grasp domain (referred to as the carbamoyl phosphate synthetic component) then catalyzes the phosphorylation of carbamate with the second ATP to form the end product carbamoyl phosphate. The reactive and unstable enzyme intermediates are sequentially channeled from one active site to the next through the interior of the protein over a distance of at least 96 A.</text>
</comment>
<comment type="similarity">
    <text evidence="1">Belongs to the CarB family.</text>
</comment>
<accession>A1R6Z3</accession>
<evidence type="ECO:0000255" key="1">
    <source>
        <dbReference type="HAMAP-Rule" id="MF_01210"/>
    </source>
</evidence>